<feature type="chain" id="PRO_1000021270" description="Shikimate dehydrogenase (NADP(+))">
    <location>
        <begin position="1"/>
        <end position="287"/>
    </location>
</feature>
<feature type="active site" description="Proton acceptor" evidence="1">
    <location>
        <position position="70"/>
    </location>
</feature>
<feature type="binding site" evidence="1">
    <location>
        <begin position="18"/>
        <end position="20"/>
    </location>
    <ligand>
        <name>shikimate</name>
        <dbReference type="ChEBI" id="CHEBI:36208"/>
    </ligand>
</feature>
<feature type="binding site" evidence="1">
    <location>
        <position position="66"/>
    </location>
    <ligand>
        <name>shikimate</name>
        <dbReference type="ChEBI" id="CHEBI:36208"/>
    </ligand>
</feature>
<feature type="binding site" evidence="1">
    <location>
        <position position="82"/>
    </location>
    <ligand>
        <name>NADP(+)</name>
        <dbReference type="ChEBI" id="CHEBI:58349"/>
    </ligand>
</feature>
<feature type="binding site" evidence="1">
    <location>
        <position position="91"/>
    </location>
    <ligand>
        <name>shikimate</name>
        <dbReference type="ChEBI" id="CHEBI:36208"/>
    </ligand>
</feature>
<feature type="binding site" evidence="1">
    <location>
        <position position="106"/>
    </location>
    <ligand>
        <name>shikimate</name>
        <dbReference type="ChEBI" id="CHEBI:36208"/>
    </ligand>
</feature>
<feature type="binding site" evidence="1">
    <location>
        <begin position="130"/>
        <end position="134"/>
    </location>
    <ligand>
        <name>NADP(+)</name>
        <dbReference type="ChEBI" id="CHEBI:58349"/>
    </ligand>
</feature>
<feature type="binding site" evidence="1">
    <location>
        <position position="228"/>
    </location>
    <ligand>
        <name>NADP(+)</name>
        <dbReference type="ChEBI" id="CHEBI:58349"/>
    </ligand>
</feature>
<feature type="binding site" evidence="1">
    <location>
        <position position="230"/>
    </location>
    <ligand>
        <name>shikimate</name>
        <dbReference type="ChEBI" id="CHEBI:36208"/>
    </ligand>
</feature>
<feature type="binding site" evidence="1">
    <location>
        <position position="251"/>
    </location>
    <ligand>
        <name>NADP(+)</name>
        <dbReference type="ChEBI" id="CHEBI:58349"/>
    </ligand>
</feature>
<dbReference type="EC" id="1.1.1.25" evidence="1"/>
<dbReference type="EMBL" id="CP000108">
    <property type="protein sequence ID" value="ABB28605.1"/>
    <property type="molecule type" value="Genomic_DNA"/>
</dbReference>
<dbReference type="SMR" id="Q3AQX0"/>
<dbReference type="STRING" id="340177.Cag_1345"/>
<dbReference type="KEGG" id="cch:Cag_1345"/>
<dbReference type="eggNOG" id="COG0169">
    <property type="taxonomic scope" value="Bacteria"/>
</dbReference>
<dbReference type="HOGENOM" id="CLU_044063_4_1_10"/>
<dbReference type="OrthoDB" id="9792692at2"/>
<dbReference type="UniPathway" id="UPA00053">
    <property type="reaction ID" value="UER00087"/>
</dbReference>
<dbReference type="GO" id="GO:0005829">
    <property type="term" value="C:cytosol"/>
    <property type="evidence" value="ECO:0007669"/>
    <property type="project" value="TreeGrafter"/>
</dbReference>
<dbReference type="GO" id="GO:0050661">
    <property type="term" value="F:NADP binding"/>
    <property type="evidence" value="ECO:0007669"/>
    <property type="project" value="InterPro"/>
</dbReference>
<dbReference type="GO" id="GO:0004764">
    <property type="term" value="F:shikimate 3-dehydrogenase (NADP+) activity"/>
    <property type="evidence" value="ECO:0007669"/>
    <property type="project" value="UniProtKB-UniRule"/>
</dbReference>
<dbReference type="GO" id="GO:0008652">
    <property type="term" value="P:amino acid biosynthetic process"/>
    <property type="evidence" value="ECO:0007669"/>
    <property type="project" value="UniProtKB-KW"/>
</dbReference>
<dbReference type="GO" id="GO:0009073">
    <property type="term" value="P:aromatic amino acid family biosynthetic process"/>
    <property type="evidence" value="ECO:0007669"/>
    <property type="project" value="UniProtKB-KW"/>
</dbReference>
<dbReference type="GO" id="GO:0009423">
    <property type="term" value="P:chorismate biosynthetic process"/>
    <property type="evidence" value="ECO:0007669"/>
    <property type="project" value="UniProtKB-UniRule"/>
</dbReference>
<dbReference type="GO" id="GO:0019632">
    <property type="term" value="P:shikimate metabolic process"/>
    <property type="evidence" value="ECO:0007669"/>
    <property type="project" value="InterPro"/>
</dbReference>
<dbReference type="CDD" id="cd01065">
    <property type="entry name" value="NAD_bind_Shikimate_DH"/>
    <property type="match status" value="1"/>
</dbReference>
<dbReference type="Gene3D" id="3.40.50.10860">
    <property type="entry name" value="Leucine Dehydrogenase, chain A, domain 1"/>
    <property type="match status" value="1"/>
</dbReference>
<dbReference type="Gene3D" id="3.40.50.720">
    <property type="entry name" value="NAD(P)-binding Rossmann-like Domain"/>
    <property type="match status" value="1"/>
</dbReference>
<dbReference type="HAMAP" id="MF_00222">
    <property type="entry name" value="Shikimate_DH_AroE"/>
    <property type="match status" value="1"/>
</dbReference>
<dbReference type="InterPro" id="IPR046346">
    <property type="entry name" value="Aminoacid_DH-like_N_sf"/>
</dbReference>
<dbReference type="InterPro" id="IPR036291">
    <property type="entry name" value="NAD(P)-bd_dom_sf"/>
</dbReference>
<dbReference type="InterPro" id="IPR041121">
    <property type="entry name" value="SDH_C"/>
</dbReference>
<dbReference type="InterPro" id="IPR011342">
    <property type="entry name" value="Shikimate_DH"/>
</dbReference>
<dbReference type="InterPro" id="IPR013708">
    <property type="entry name" value="Shikimate_DH-bd_N"/>
</dbReference>
<dbReference type="InterPro" id="IPR022893">
    <property type="entry name" value="Shikimate_DH_fam"/>
</dbReference>
<dbReference type="NCBIfam" id="TIGR00507">
    <property type="entry name" value="aroE"/>
    <property type="match status" value="1"/>
</dbReference>
<dbReference type="PANTHER" id="PTHR21089:SF1">
    <property type="entry name" value="BIFUNCTIONAL 3-DEHYDROQUINATE DEHYDRATASE_SHIKIMATE DEHYDROGENASE, CHLOROPLASTIC"/>
    <property type="match status" value="1"/>
</dbReference>
<dbReference type="PANTHER" id="PTHR21089">
    <property type="entry name" value="SHIKIMATE DEHYDROGENASE"/>
    <property type="match status" value="1"/>
</dbReference>
<dbReference type="Pfam" id="PF18317">
    <property type="entry name" value="SDH_C"/>
    <property type="match status" value="1"/>
</dbReference>
<dbReference type="Pfam" id="PF08501">
    <property type="entry name" value="Shikimate_dh_N"/>
    <property type="match status" value="1"/>
</dbReference>
<dbReference type="SUPFAM" id="SSF53223">
    <property type="entry name" value="Aminoacid dehydrogenase-like, N-terminal domain"/>
    <property type="match status" value="1"/>
</dbReference>
<dbReference type="SUPFAM" id="SSF51735">
    <property type="entry name" value="NAD(P)-binding Rossmann-fold domains"/>
    <property type="match status" value="1"/>
</dbReference>
<gene>
    <name evidence="1" type="primary">aroE</name>
    <name type="ordered locus">Cag_1345</name>
</gene>
<protein>
    <recommendedName>
        <fullName evidence="1">Shikimate dehydrogenase (NADP(+))</fullName>
        <shortName evidence="1">SDH</shortName>
        <ecNumber evidence="1">1.1.1.25</ecNumber>
    </recommendedName>
</protein>
<organism>
    <name type="scientific">Chlorobium chlorochromatii (strain CaD3)</name>
    <dbReference type="NCBI Taxonomy" id="340177"/>
    <lineage>
        <taxon>Bacteria</taxon>
        <taxon>Pseudomonadati</taxon>
        <taxon>Chlorobiota</taxon>
        <taxon>Chlorobiia</taxon>
        <taxon>Chlorobiales</taxon>
        <taxon>Chlorobiaceae</taxon>
        <taxon>Chlorobium/Pelodictyon group</taxon>
        <taxon>Chlorobium</taxon>
    </lineage>
</organism>
<keyword id="KW-0028">Amino-acid biosynthesis</keyword>
<keyword id="KW-0057">Aromatic amino acid biosynthesis</keyword>
<keyword id="KW-0521">NADP</keyword>
<keyword id="KW-0560">Oxidoreductase</keyword>
<sequence length="287" mass="31219">MNSSTRIFALLGRAVDYSYSPLIHNTAFQALGLPYHYTIFNIAEAALVGDALRGARALGLGGFSVTIPYKQTVVPFLDELSEEATTIQAVNCIVNKNGKLIGYNTDILGFASPLFAYREALHGATIALFGSGGAALAAIEAFQRYFTPKQVLLFARDSQKAKSQLRSSLALERYTNLAIVPLSDYERVRECRLVINATPLGTKGRADGSAIIPLESNLLHSEHIVYDMVYNPTITPLLQAAQAVGASTIFGIEMLIGQAEQAFTLWTGEKMPTELVRQTVMAKLQEL</sequence>
<reference key="1">
    <citation type="submission" date="2005-08" db="EMBL/GenBank/DDBJ databases">
        <title>Complete sequence of Chlorobium chlorochromatii CaD3.</title>
        <authorList>
            <consortium name="US DOE Joint Genome Institute"/>
            <person name="Copeland A."/>
            <person name="Lucas S."/>
            <person name="Lapidus A."/>
            <person name="Barry K."/>
            <person name="Detter J.C."/>
            <person name="Glavina T."/>
            <person name="Hammon N."/>
            <person name="Israni S."/>
            <person name="Pitluck S."/>
            <person name="Bryant D."/>
            <person name="Schmutz J."/>
            <person name="Larimer F."/>
            <person name="Land M."/>
            <person name="Kyrpides N."/>
            <person name="Ivanova N."/>
            <person name="Richardson P."/>
        </authorList>
    </citation>
    <scope>NUCLEOTIDE SEQUENCE [LARGE SCALE GENOMIC DNA]</scope>
    <source>
        <strain>CaD3</strain>
    </source>
</reference>
<accession>Q3AQX0</accession>
<evidence type="ECO:0000255" key="1">
    <source>
        <dbReference type="HAMAP-Rule" id="MF_00222"/>
    </source>
</evidence>
<comment type="function">
    <text evidence="1">Involved in the biosynthesis of the chorismate, which leads to the biosynthesis of aromatic amino acids. Catalyzes the reversible NADPH linked reduction of 3-dehydroshikimate (DHSA) to yield shikimate (SA).</text>
</comment>
<comment type="catalytic activity">
    <reaction evidence="1">
        <text>shikimate + NADP(+) = 3-dehydroshikimate + NADPH + H(+)</text>
        <dbReference type="Rhea" id="RHEA:17737"/>
        <dbReference type="ChEBI" id="CHEBI:15378"/>
        <dbReference type="ChEBI" id="CHEBI:16630"/>
        <dbReference type="ChEBI" id="CHEBI:36208"/>
        <dbReference type="ChEBI" id="CHEBI:57783"/>
        <dbReference type="ChEBI" id="CHEBI:58349"/>
        <dbReference type="EC" id="1.1.1.25"/>
    </reaction>
</comment>
<comment type="pathway">
    <text evidence="1">Metabolic intermediate biosynthesis; chorismate biosynthesis; chorismate from D-erythrose 4-phosphate and phosphoenolpyruvate: step 4/7.</text>
</comment>
<comment type="subunit">
    <text evidence="1">Homodimer.</text>
</comment>
<comment type="similarity">
    <text evidence="1">Belongs to the shikimate dehydrogenase family.</text>
</comment>
<proteinExistence type="inferred from homology"/>
<name>AROE_CHLCH</name>